<sequence length="735" mass="79508">MGRGGIGGAGLVAAVAKADVENTDSTRGFVKDVKRIIIKVGTAVVTGPNGRLAMGRLGALCEQVKQLNFEGYEVILVTSGAVGVGRQRLKYRKLVNSSFADLQNPQMDMDGKACAAVGQSVLMAIYDTLFSQLDVTSSQLLVTDRDFMDPSFGNQLRETVNSLLDLKVIPVFNENDAISTRRQPYEDSSGIFWDNDSLARLLAQELKADLLIMLSDVEGLYSGPPSDPQSKIIHTYVHEQHGKLISFGEKSRVGRGGMQAKVAAAFTASSKGIPVVIASGFAIDSIIKVMRGEKIGTLFHREANQWGCSKEATAREMAVAARDCSRHLQKLSSEERKKILLDIADALEANEDLITSENQADLDLAQDIGYDKSLVARMTIKPGKIKSLAGSIREIADMEDPISHTLKRTEVAKDLVFEKTYCPLGVLLIIFESRPDALVQIASLAIRSGNGLLLKGGKEAMRSNTILHKVITGAIPDVVGKKLIGLVKNKDEIADLLKLDDVIDLVIPRGSNKLVSQIKAATKIPVLGHADGICHVYIDKSADMDMAKRIVLDAKVDYPAACNAMETLLVHKDLNRTEGLDDLLVELEKEGVVIYGGPVAHDTLKLPKVDSFHHEYNSMACTLEFVDDVQSAIDHINRYGSAHTDCIITTDGKAAETFLQQVDSAAVFHNASTRFCDGARFGLGAEVGISTGRIHARGPVGVDGLLTTRCILRGSGQVVNGDKGVVYTHRELPLQ</sequence>
<evidence type="ECO:0000250" key="1">
    <source>
        <dbReference type="UniProtKB" id="P0A7B5"/>
    </source>
</evidence>
<evidence type="ECO:0000250" key="2">
    <source>
        <dbReference type="UniProtKB" id="Q9PJ29"/>
    </source>
</evidence>
<evidence type="ECO:0000269" key="3">
    <source ref="7"/>
</evidence>
<evidence type="ECO:0000303" key="4">
    <source ref="7"/>
</evidence>
<evidence type="ECO:0000305" key="5"/>
<evidence type="ECO:0000312" key="6">
    <source>
        <dbReference type="EMBL" id="BAB64280.1"/>
    </source>
</evidence>
<evidence type="ECO:0000312" key="7">
    <source>
        <dbReference type="EMBL" id="BAF06716.1"/>
    </source>
</evidence>
<evidence type="ECO:0000312" key="8">
    <source>
        <dbReference type="EMBL" id="EEE55670.1"/>
    </source>
</evidence>
<gene>
    <name evidence="4" type="primary">P5CS2</name>
    <name evidence="7" type="ordered locus">Os01g0848200</name>
    <name evidence="8" type="ORF">OsJ_04075</name>
    <name evidence="6" type="ORF">P0005H10.23</name>
</gene>
<keyword id="KW-0028">Amino-acid biosynthesis</keyword>
<keyword id="KW-0067">ATP-binding</keyword>
<keyword id="KW-0418">Kinase</keyword>
<keyword id="KW-0511">Multifunctional enzyme</keyword>
<keyword id="KW-0521">NADP</keyword>
<keyword id="KW-0547">Nucleotide-binding</keyword>
<keyword id="KW-0560">Oxidoreductase</keyword>
<keyword id="KW-0641">Proline biosynthesis</keyword>
<keyword id="KW-1185">Reference proteome</keyword>
<keyword id="KW-0346">Stress response</keyword>
<keyword id="KW-0808">Transferase</keyword>
<name>P5CS2_ORYSJ</name>
<accession>Q941T1</accession>
<dbReference type="EC" id="2.7.2.11"/>
<dbReference type="EC" id="1.2.1.41"/>
<dbReference type="EMBL" id="AP004127">
    <property type="protein sequence ID" value="BAB64280.1"/>
    <property type="molecule type" value="Genomic_DNA"/>
</dbReference>
<dbReference type="EMBL" id="AP008207">
    <property type="protein sequence ID" value="BAF06716.1"/>
    <property type="molecule type" value="Genomic_DNA"/>
</dbReference>
<dbReference type="EMBL" id="AP014957">
    <property type="protein sequence ID" value="BAS75219.1"/>
    <property type="molecule type" value="Genomic_DNA"/>
</dbReference>
<dbReference type="EMBL" id="CM000138">
    <property type="protein sequence ID" value="EEE55670.1"/>
    <property type="molecule type" value="Genomic_DNA"/>
</dbReference>
<dbReference type="EMBL" id="AK101230">
    <property type="protein sequence ID" value="BAG94966.1"/>
    <property type="molecule type" value="mRNA"/>
</dbReference>
<dbReference type="RefSeq" id="XP_015622203.1">
    <property type="nucleotide sequence ID" value="XM_015766717.1"/>
</dbReference>
<dbReference type="SMR" id="Q941T1"/>
<dbReference type="FunCoup" id="Q941T1">
    <property type="interactions" value="1705"/>
</dbReference>
<dbReference type="STRING" id="39947.Q941T1"/>
<dbReference type="PaxDb" id="39947-Q941T1"/>
<dbReference type="EnsemblPlants" id="Os01t0848200-01">
    <property type="protein sequence ID" value="Os01t0848200-01"/>
    <property type="gene ID" value="Os01g0848200"/>
</dbReference>
<dbReference type="EnsemblPlants" id="Os01t0848200-02">
    <property type="protein sequence ID" value="Os01t0848200-02"/>
    <property type="gene ID" value="Os01g0848200"/>
</dbReference>
<dbReference type="Gramene" id="Os01t0848200-01">
    <property type="protein sequence ID" value="Os01t0848200-01"/>
    <property type="gene ID" value="Os01g0848200"/>
</dbReference>
<dbReference type="Gramene" id="Os01t0848200-02">
    <property type="protein sequence ID" value="Os01t0848200-02"/>
    <property type="gene ID" value="Os01g0848200"/>
</dbReference>
<dbReference type="KEGG" id="dosa:Os01g0848200"/>
<dbReference type="eggNOG" id="KOG1154">
    <property type="taxonomic scope" value="Eukaryota"/>
</dbReference>
<dbReference type="eggNOG" id="KOG4165">
    <property type="taxonomic scope" value="Eukaryota"/>
</dbReference>
<dbReference type="HOGENOM" id="CLU_016144_0_0_1"/>
<dbReference type="InParanoid" id="Q941T1"/>
<dbReference type="OMA" id="QMVNTHE"/>
<dbReference type="OrthoDB" id="1934954at2759"/>
<dbReference type="BRENDA" id="1.2.1.41">
    <property type="organism ID" value="4460"/>
</dbReference>
<dbReference type="UniPathway" id="UPA00098">
    <property type="reaction ID" value="UER00359"/>
</dbReference>
<dbReference type="UniPathway" id="UPA00098">
    <property type="reaction ID" value="UER00360"/>
</dbReference>
<dbReference type="Proteomes" id="UP000000763">
    <property type="component" value="Chromosome 1"/>
</dbReference>
<dbReference type="Proteomes" id="UP000007752">
    <property type="component" value="Chromosome 1"/>
</dbReference>
<dbReference type="Proteomes" id="UP000059680">
    <property type="component" value="Chromosome 1"/>
</dbReference>
<dbReference type="GO" id="GO:0005737">
    <property type="term" value="C:cytoplasm"/>
    <property type="evidence" value="ECO:0007669"/>
    <property type="project" value="InterPro"/>
</dbReference>
<dbReference type="GO" id="GO:0005524">
    <property type="term" value="F:ATP binding"/>
    <property type="evidence" value="ECO:0007669"/>
    <property type="project" value="UniProtKB-KW"/>
</dbReference>
<dbReference type="GO" id="GO:0004349">
    <property type="term" value="F:glutamate 5-kinase activity"/>
    <property type="evidence" value="ECO:0007669"/>
    <property type="project" value="UniProtKB-EC"/>
</dbReference>
<dbReference type="GO" id="GO:0004350">
    <property type="term" value="F:glutamate-5-semialdehyde dehydrogenase activity"/>
    <property type="evidence" value="ECO:0000318"/>
    <property type="project" value="GO_Central"/>
</dbReference>
<dbReference type="GO" id="GO:0055129">
    <property type="term" value="P:L-proline biosynthetic process"/>
    <property type="evidence" value="ECO:0007669"/>
    <property type="project" value="UniProtKB-UniPathway"/>
</dbReference>
<dbReference type="GO" id="GO:0006561">
    <property type="term" value="P:proline biosynthetic process"/>
    <property type="evidence" value="ECO:0000315"/>
    <property type="project" value="UniProtKB"/>
</dbReference>
<dbReference type="CDD" id="cd07079">
    <property type="entry name" value="ALDH_F18-19_ProA-GPR"/>
    <property type="match status" value="1"/>
</dbReference>
<dbReference type="FunFam" id="3.40.1160.10:FF:000013">
    <property type="entry name" value="Delta-1-pyrroline-5-carboxylate synthase"/>
    <property type="match status" value="1"/>
</dbReference>
<dbReference type="FunFam" id="3.40.309.10:FF:000015">
    <property type="entry name" value="Delta-1-pyrroline-5-carboxylate synthase"/>
    <property type="match status" value="1"/>
</dbReference>
<dbReference type="Gene3D" id="3.40.1160.10">
    <property type="entry name" value="Acetylglutamate kinase-like"/>
    <property type="match status" value="1"/>
</dbReference>
<dbReference type="Gene3D" id="3.40.605.10">
    <property type="entry name" value="Aldehyde Dehydrogenase, Chain A, domain 1"/>
    <property type="match status" value="1"/>
</dbReference>
<dbReference type="Gene3D" id="3.40.309.10">
    <property type="entry name" value="Aldehyde Dehydrogenase, Chain A, domain 2"/>
    <property type="match status" value="1"/>
</dbReference>
<dbReference type="HAMAP" id="MF_00412">
    <property type="entry name" value="ProA"/>
    <property type="match status" value="1"/>
</dbReference>
<dbReference type="HAMAP" id="MF_00456">
    <property type="entry name" value="ProB"/>
    <property type="match status" value="1"/>
</dbReference>
<dbReference type="InterPro" id="IPR036393">
    <property type="entry name" value="AceGlu_kinase-like_sf"/>
</dbReference>
<dbReference type="InterPro" id="IPR016161">
    <property type="entry name" value="Ald_DH/histidinol_DH"/>
</dbReference>
<dbReference type="InterPro" id="IPR016163">
    <property type="entry name" value="Ald_DH_C"/>
</dbReference>
<dbReference type="InterPro" id="IPR016162">
    <property type="entry name" value="Ald_DH_N"/>
</dbReference>
<dbReference type="InterPro" id="IPR015590">
    <property type="entry name" value="Aldehyde_DH_dom"/>
</dbReference>
<dbReference type="InterPro" id="IPR001048">
    <property type="entry name" value="Asp/Glu/Uridylate_kinase"/>
</dbReference>
<dbReference type="InterPro" id="IPR020593">
    <property type="entry name" value="G-glutamylP_reductase_CS"/>
</dbReference>
<dbReference type="InterPro" id="IPR001057">
    <property type="entry name" value="Glu/AcGlu_kinase"/>
</dbReference>
<dbReference type="InterPro" id="IPR005715">
    <property type="entry name" value="Glu_5kinase/COase_Synthase"/>
</dbReference>
<dbReference type="InterPro" id="IPR019797">
    <property type="entry name" value="Glutamate_5-kinase_CS"/>
</dbReference>
<dbReference type="InterPro" id="IPR000965">
    <property type="entry name" value="GPR_dom"/>
</dbReference>
<dbReference type="InterPro" id="IPR005766">
    <property type="entry name" value="P5_carboxy_syn"/>
</dbReference>
<dbReference type="NCBIfam" id="TIGR01092">
    <property type="entry name" value="P5CS"/>
    <property type="match status" value="1"/>
</dbReference>
<dbReference type="NCBIfam" id="NF001221">
    <property type="entry name" value="PRK00197.1"/>
    <property type="match status" value="1"/>
</dbReference>
<dbReference type="NCBIfam" id="TIGR00407">
    <property type="entry name" value="proA"/>
    <property type="match status" value="1"/>
</dbReference>
<dbReference type="NCBIfam" id="TIGR01027">
    <property type="entry name" value="proB"/>
    <property type="match status" value="1"/>
</dbReference>
<dbReference type="PANTHER" id="PTHR11063:SF13">
    <property type="entry name" value="DELTA-1-PYRROLINE-5-CARBOXYLATE SYNTHASE 2"/>
    <property type="match status" value="1"/>
</dbReference>
<dbReference type="PANTHER" id="PTHR11063">
    <property type="entry name" value="GLUTAMATE SEMIALDEHYDE DEHYDROGENASE"/>
    <property type="match status" value="1"/>
</dbReference>
<dbReference type="Pfam" id="PF00696">
    <property type="entry name" value="AA_kinase"/>
    <property type="match status" value="1"/>
</dbReference>
<dbReference type="Pfam" id="PF00171">
    <property type="entry name" value="Aldedh"/>
    <property type="match status" value="1"/>
</dbReference>
<dbReference type="PIRSF" id="PIRSF036429">
    <property type="entry name" value="P5C_syn"/>
    <property type="match status" value="1"/>
</dbReference>
<dbReference type="PRINTS" id="PR00474">
    <property type="entry name" value="GLU5KINASE"/>
</dbReference>
<dbReference type="SUPFAM" id="SSF53720">
    <property type="entry name" value="ALDH-like"/>
    <property type="match status" value="1"/>
</dbReference>
<dbReference type="SUPFAM" id="SSF53633">
    <property type="entry name" value="Carbamate kinase-like"/>
    <property type="match status" value="1"/>
</dbReference>
<dbReference type="PROSITE" id="PS00902">
    <property type="entry name" value="GLUTAMATE_5_KINASE"/>
    <property type="match status" value="1"/>
</dbReference>
<dbReference type="PROSITE" id="PS01223">
    <property type="entry name" value="PROA"/>
    <property type="match status" value="1"/>
</dbReference>
<reference key="1">
    <citation type="journal article" date="2002" name="Nature">
        <title>The genome sequence and structure of rice chromosome 1.</title>
        <authorList>
            <person name="Sasaki T."/>
            <person name="Matsumoto T."/>
            <person name="Yamamoto K."/>
            <person name="Sakata K."/>
            <person name="Baba T."/>
            <person name="Katayose Y."/>
            <person name="Wu J."/>
            <person name="Niimura Y."/>
            <person name="Cheng Z."/>
            <person name="Nagamura Y."/>
            <person name="Antonio B.A."/>
            <person name="Kanamori H."/>
            <person name="Hosokawa S."/>
            <person name="Masukawa M."/>
            <person name="Arikawa K."/>
            <person name="Chiden Y."/>
            <person name="Hayashi M."/>
            <person name="Okamoto M."/>
            <person name="Ando T."/>
            <person name="Aoki H."/>
            <person name="Arita K."/>
            <person name="Hamada M."/>
            <person name="Harada C."/>
            <person name="Hijishita S."/>
            <person name="Honda M."/>
            <person name="Ichikawa Y."/>
            <person name="Idonuma A."/>
            <person name="Iijima M."/>
            <person name="Ikeda M."/>
            <person name="Ikeno M."/>
            <person name="Ito S."/>
            <person name="Ito T."/>
            <person name="Ito Y."/>
            <person name="Ito Y."/>
            <person name="Iwabuchi A."/>
            <person name="Kamiya K."/>
            <person name="Karasawa W."/>
            <person name="Katagiri S."/>
            <person name="Kikuta A."/>
            <person name="Kobayashi N."/>
            <person name="Kono I."/>
            <person name="Machita K."/>
            <person name="Maehara T."/>
            <person name="Mizuno H."/>
            <person name="Mizubayashi T."/>
            <person name="Mukai Y."/>
            <person name="Nagasaki H."/>
            <person name="Nakashima M."/>
            <person name="Nakama Y."/>
            <person name="Nakamichi Y."/>
            <person name="Nakamura M."/>
            <person name="Namiki N."/>
            <person name="Negishi M."/>
            <person name="Ohta I."/>
            <person name="Ono N."/>
            <person name="Saji S."/>
            <person name="Sakai K."/>
            <person name="Shibata M."/>
            <person name="Shimokawa T."/>
            <person name="Shomura A."/>
            <person name="Song J."/>
            <person name="Takazaki Y."/>
            <person name="Terasawa K."/>
            <person name="Tsuji K."/>
            <person name="Waki K."/>
            <person name="Yamagata H."/>
            <person name="Yamane H."/>
            <person name="Yoshiki S."/>
            <person name="Yoshihara R."/>
            <person name="Yukawa K."/>
            <person name="Zhong H."/>
            <person name="Iwama H."/>
            <person name="Endo T."/>
            <person name="Ito H."/>
            <person name="Hahn J.H."/>
            <person name="Kim H.-I."/>
            <person name="Eun M.-Y."/>
            <person name="Yano M."/>
            <person name="Jiang J."/>
            <person name="Gojobori T."/>
        </authorList>
    </citation>
    <scope>NUCLEOTIDE SEQUENCE [LARGE SCALE GENOMIC DNA]</scope>
    <source>
        <strain>cv. Nipponbare</strain>
    </source>
</reference>
<reference key="2">
    <citation type="journal article" date="2005" name="Nature">
        <title>The map-based sequence of the rice genome.</title>
        <authorList>
            <consortium name="International rice genome sequencing project (IRGSP)"/>
        </authorList>
    </citation>
    <scope>NUCLEOTIDE SEQUENCE [LARGE SCALE GENOMIC DNA]</scope>
    <source>
        <strain>cv. Nipponbare</strain>
    </source>
</reference>
<reference key="3">
    <citation type="journal article" date="2008" name="Nucleic Acids Res.">
        <title>The rice annotation project database (RAP-DB): 2008 update.</title>
        <authorList>
            <consortium name="The rice annotation project (RAP)"/>
        </authorList>
    </citation>
    <scope>GENOME REANNOTATION</scope>
    <source>
        <strain>cv. Nipponbare</strain>
    </source>
</reference>
<reference key="4">
    <citation type="journal article" date="2013" name="Rice">
        <title>Improvement of the Oryza sativa Nipponbare reference genome using next generation sequence and optical map data.</title>
        <authorList>
            <person name="Kawahara Y."/>
            <person name="de la Bastide M."/>
            <person name="Hamilton J.P."/>
            <person name="Kanamori H."/>
            <person name="McCombie W.R."/>
            <person name="Ouyang S."/>
            <person name="Schwartz D.C."/>
            <person name="Tanaka T."/>
            <person name="Wu J."/>
            <person name="Zhou S."/>
            <person name="Childs K.L."/>
            <person name="Davidson R.M."/>
            <person name="Lin H."/>
            <person name="Quesada-Ocampo L."/>
            <person name="Vaillancourt B."/>
            <person name="Sakai H."/>
            <person name="Lee S.S."/>
            <person name="Kim J."/>
            <person name="Numa H."/>
            <person name="Itoh T."/>
            <person name="Buell C.R."/>
            <person name="Matsumoto T."/>
        </authorList>
    </citation>
    <scope>GENOME REANNOTATION</scope>
    <source>
        <strain>cv. Nipponbare</strain>
    </source>
</reference>
<reference key="5">
    <citation type="journal article" date="2005" name="PLoS Biol.">
        <title>The genomes of Oryza sativa: a history of duplications.</title>
        <authorList>
            <person name="Yu J."/>
            <person name="Wang J."/>
            <person name="Lin W."/>
            <person name="Li S."/>
            <person name="Li H."/>
            <person name="Zhou J."/>
            <person name="Ni P."/>
            <person name="Dong W."/>
            <person name="Hu S."/>
            <person name="Zeng C."/>
            <person name="Zhang J."/>
            <person name="Zhang Y."/>
            <person name="Li R."/>
            <person name="Xu Z."/>
            <person name="Li S."/>
            <person name="Li X."/>
            <person name="Zheng H."/>
            <person name="Cong L."/>
            <person name="Lin L."/>
            <person name="Yin J."/>
            <person name="Geng J."/>
            <person name="Li G."/>
            <person name="Shi J."/>
            <person name="Liu J."/>
            <person name="Lv H."/>
            <person name="Li J."/>
            <person name="Wang J."/>
            <person name="Deng Y."/>
            <person name="Ran L."/>
            <person name="Shi X."/>
            <person name="Wang X."/>
            <person name="Wu Q."/>
            <person name="Li C."/>
            <person name="Ren X."/>
            <person name="Wang J."/>
            <person name="Wang X."/>
            <person name="Li D."/>
            <person name="Liu D."/>
            <person name="Zhang X."/>
            <person name="Ji Z."/>
            <person name="Zhao W."/>
            <person name="Sun Y."/>
            <person name="Zhang Z."/>
            <person name="Bao J."/>
            <person name="Han Y."/>
            <person name="Dong L."/>
            <person name="Ji J."/>
            <person name="Chen P."/>
            <person name="Wu S."/>
            <person name="Liu J."/>
            <person name="Xiao Y."/>
            <person name="Bu D."/>
            <person name="Tan J."/>
            <person name="Yang L."/>
            <person name="Ye C."/>
            <person name="Zhang J."/>
            <person name="Xu J."/>
            <person name="Zhou Y."/>
            <person name="Yu Y."/>
            <person name="Zhang B."/>
            <person name="Zhuang S."/>
            <person name="Wei H."/>
            <person name="Liu B."/>
            <person name="Lei M."/>
            <person name="Yu H."/>
            <person name="Li Y."/>
            <person name="Xu H."/>
            <person name="Wei S."/>
            <person name="He X."/>
            <person name="Fang L."/>
            <person name="Zhang Z."/>
            <person name="Zhang Y."/>
            <person name="Huang X."/>
            <person name="Su Z."/>
            <person name="Tong W."/>
            <person name="Li J."/>
            <person name="Tong Z."/>
            <person name="Li S."/>
            <person name="Ye J."/>
            <person name="Wang L."/>
            <person name="Fang L."/>
            <person name="Lei T."/>
            <person name="Chen C.-S."/>
            <person name="Chen H.-C."/>
            <person name="Xu Z."/>
            <person name="Li H."/>
            <person name="Huang H."/>
            <person name="Zhang F."/>
            <person name="Xu H."/>
            <person name="Li N."/>
            <person name="Zhao C."/>
            <person name="Li S."/>
            <person name="Dong L."/>
            <person name="Huang Y."/>
            <person name="Li L."/>
            <person name="Xi Y."/>
            <person name="Qi Q."/>
            <person name="Li W."/>
            <person name="Zhang B."/>
            <person name="Hu W."/>
            <person name="Zhang Y."/>
            <person name="Tian X."/>
            <person name="Jiao Y."/>
            <person name="Liang X."/>
            <person name="Jin J."/>
            <person name="Gao L."/>
            <person name="Zheng W."/>
            <person name="Hao B."/>
            <person name="Liu S.-M."/>
            <person name="Wang W."/>
            <person name="Yuan L."/>
            <person name="Cao M."/>
            <person name="McDermott J."/>
            <person name="Samudrala R."/>
            <person name="Wang J."/>
            <person name="Wong G.K.-S."/>
            <person name="Yang H."/>
        </authorList>
    </citation>
    <scope>NUCLEOTIDE SEQUENCE [LARGE SCALE GENOMIC DNA]</scope>
    <source>
        <strain>cv. Nipponbare</strain>
    </source>
</reference>
<reference key="6">
    <citation type="journal article" date="2003" name="Science">
        <title>Collection, mapping, and annotation of over 28,000 cDNA clones from japonica rice.</title>
        <authorList>
            <consortium name="The rice full-length cDNA consortium"/>
        </authorList>
    </citation>
    <scope>NUCLEOTIDE SEQUENCE [LARGE SCALE MRNA]</scope>
    <source>
        <strain>cv. Nipponbare</strain>
    </source>
</reference>
<reference key="7">
    <citation type="journal article" date="2014" name="Ying Yong Yu Huan Jing Sheng Wu Xue Bao">
        <title>Co-expression of rice OsP5CS1 and OsP5CS2 genes in transgenic tobacco resulted in elevated proline biosynthesis and enhanced abiotic stress tolerance.</title>
        <authorList>
            <person name="Zhang X."/>
            <person name="Tang W."/>
            <person name="Liu J."/>
            <person name="Liu Y."/>
        </authorList>
    </citation>
    <scope>FUNCTION</scope>
</reference>
<protein>
    <recommendedName>
        <fullName evidence="5">Delta-1-pyrroline-5-carboxylate synthase 2</fullName>
        <shortName evidence="4">OsP5CS2</shortName>
    </recommendedName>
    <domain>
        <recommendedName>
            <fullName>Glutamate 5-kinase</fullName>
            <shortName>GK</shortName>
            <ecNumber>2.7.2.11</ecNumber>
        </recommendedName>
        <alternativeName>
            <fullName>Gamma-glutamyl kinase</fullName>
        </alternativeName>
    </domain>
    <domain>
        <recommendedName>
            <fullName>Gamma-glutamyl phosphate reductase</fullName>
            <shortName>GPR</shortName>
            <ecNumber>1.2.1.41</ecNumber>
        </recommendedName>
        <alternativeName>
            <fullName>Glutamate-5-semialdehyde dehydrogenase</fullName>
        </alternativeName>
        <alternativeName>
            <fullName>Glutamyl-gamma-semialdehyde dehydrogenase</fullName>
        </alternativeName>
    </domain>
</protein>
<feature type="chain" id="PRO_0000439825" description="Delta-1-pyrroline-5-carboxylate synthase 2">
    <location>
        <begin position="1"/>
        <end position="735"/>
    </location>
</feature>
<feature type="region of interest" description="Glutamate 5-kinase">
    <location>
        <begin position="1"/>
        <end position="315"/>
    </location>
</feature>
<feature type="region of interest" description="Gamma-glutamyl phosphate reductase">
    <location>
        <begin position="316"/>
        <end position="735"/>
    </location>
</feature>
<feature type="binding site" evidence="1">
    <location>
        <position position="79"/>
    </location>
    <ligand>
        <name>substrate</name>
    </ligand>
</feature>
<feature type="binding site" evidence="1">
    <location>
        <position position="176"/>
    </location>
    <ligand>
        <name>substrate</name>
    </ligand>
</feature>
<feature type="binding site" evidence="1">
    <location>
        <position position="195"/>
    </location>
    <ligand>
        <name>substrate</name>
    </ligand>
</feature>
<feature type="binding site" evidence="2">
    <location>
        <begin position="215"/>
        <end position="216"/>
    </location>
    <ligand>
        <name>ATP</name>
        <dbReference type="ChEBI" id="CHEBI:30616"/>
    </ligand>
</feature>
<feature type="binding site" evidence="2">
    <location>
        <begin position="221"/>
        <end position="226"/>
    </location>
    <ligand>
        <name>ATP</name>
        <dbReference type="ChEBI" id="CHEBI:30616"/>
    </ligand>
</feature>
<feature type="binding site" evidence="2">
    <location>
        <begin position="255"/>
        <end position="261"/>
    </location>
    <ligand>
        <name>ATP</name>
        <dbReference type="ChEBI" id="CHEBI:30616"/>
    </ligand>
</feature>
<comment type="function">
    <text evidence="3">P5CS plays a key role in proline biosynthesis, leading to osmoregulation in plants. Involved in abiotic stress tolerance.</text>
</comment>
<comment type="catalytic activity">
    <reaction>
        <text>L-glutamate + ATP = L-glutamyl 5-phosphate + ADP</text>
        <dbReference type="Rhea" id="RHEA:14877"/>
        <dbReference type="ChEBI" id="CHEBI:29985"/>
        <dbReference type="ChEBI" id="CHEBI:30616"/>
        <dbReference type="ChEBI" id="CHEBI:58274"/>
        <dbReference type="ChEBI" id="CHEBI:456216"/>
        <dbReference type="EC" id="2.7.2.11"/>
    </reaction>
</comment>
<comment type="catalytic activity">
    <reaction>
        <text>L-glutamate 5-semialdehyde + phosphate + NADP(+) = L-glutamyl 5-phosphate + NADPH + H(+)</text>
        <dbReference type="Rhea" id="RHEA:19541"/>
        <dbReference type="ChEBI" id="CHEBI:15378"/>
        <dbReference type="ChEBI" id="CHEBI:43474"/>
        <dbReference type="ChEBI" id="CHEBI:57783"/>
        <dbReference type="ChEBI" id="CHEBI:58066"/>
        <dbReference type="ChEBI" id="CHEBI:58274"/>
        <dbReference type="ChEBI" id="CHEBI:58349"/>
        <dbReference type="EC" id="1.2.1.41"/>
    </reaction>
</comment>
<comment type="activity regulation">
    <text>Feedback regulated by proline.</text>
</comment>
<comment type="pathway">
    <text>Amino-acid biosynthesis; L-proline biosynthesis; L-glutamate 5-semialdehyde from L-glutamate: step 1/2.</text>
</comment>
<comment type="pathway">
    <text>Amino-acid biosynthesis; L-proline biosynthesis; L-glutamate 5-semialdehyde from L-glutamate: step 2/2.</text>
</comment>
<comment type="miscellaneous">
    <text evidence="3">Tobacco plants over-expressing P5CS1 and P5CS2 have elevated proline levels and display enhanced abiotic stress tolerance.</text>
</comment>
<comment type="similarity">
    <text evidence="5">In the N-terminal section; belongs to the glutamate 5-kinase family.</text>
</comment>
<comment type="similarity">
    <text evidence="5">In the C-terminal section; belongs to the gamma-glutamyl phosphate reductase family.</text>
</comment>
<organism>
    <name type="scientific">Oryza sativa subsp. japonica</name>
    <name type="common">Rice</name>
    <dbReference type="NCBI Taxonomy" id="39947"/>
    <lineage>
        <taxon>Eukaryota</taxon>
        <taxon>Viridiplantae</taxon>
        <taxon>Streptophyta</taxon>
        <taxon>Embryophyta</taxon>
        <taxon>Tracheophyta</taxon>
        <taxon>Spermatophyta</taxon>
        <taxon>Magnoliopsida</taxon>
        <taxon>Liliopsida</taxon>
        <taxon>Poales</taxon>
        <taxon>Poaceae</taxon>
        <taxon>BOP clade</taxon>
        <taxon>Oryzoideae</taxon>
        <taxon>Oryzeae</taxon>
        <taxon>Oryzinae</taxon>
        <taxon>Oryza</taxon>
        <taxon>Oryza sativa</taxon>
    </lineage>
</organism>
<proteinExistence type="evidence at transcript level"/>